<protein>
    <recommendedName>
        <fullName>182 kDa tankyrase-1-binding protein</fullName>
    </recommendedName>
</protein>
<comment type="subunit">
    <text>Binds to the ANK repeat domain of TNKS1 and TNKS2.</text>
</comment>
<comment type="interaction">
    <interactant intactId="EBI-2104458">
        <id>Q9C0C2</id>
    </interactant>
    <interactant intactId="EBI-1046635">
        <id>Q96LI5</id>
        <label>CNOT6L</label>
    </interactant>
    <organismsDiffer>false</organismsDiffer>
    <experiments>3</experiments>
</comment>
<comment type="interaction">
    <interactant intactId="EBI-2104458">
        <id>Q9C0C2</id>
    </interactant>
    <interactant intactId="EBI-701903">
        <id>Q14192</id>
        <label>FHL2</label>
    </interactant>
    <organismsDiffer>false</organismsDiffer>
    <experiments>8</experiments>
</comment>
<comment type="interaction">
    <interactant intactId="EBI-2104458">
        <id>Q9C0C2</id>
    </interactant>
    <interactant intactId="EBI-1105254">
        <id>O95271</id>
        <label>TNKS</label>
    </interactant>
    <organismsDiffer>false</organismsDiffer>
    <experiments>2</experiments>
</comment>
<comment type="interaction">
    <interactant intactId="EBI-2104458">
        <id>Q9C0C2</id>
    </interactant>
    <interactant intactId="EBI-4398527">
        <id>Q9H2K2</id>
        <label>TNKS2</label>
    </interactant>
    <organismsDiffer>false</organismsDiffer>
    <experiments>3</experiments>
</comment>
<comment type="interaction">
    <interactant intactId="EBI-2104458">
        <id>Q9C0C2</id>
    </interactant>
    <interactant intactId="EBI-723281">
        <id>P50616</id>
        <label>TOB1</label>
    </interactant>
    <organismsDiffer>false</organismsDiffer>
    <experiments>4</experiments>
</comment>
<comment type="subcellular location">
    <subcellularLocation>
        <location>Nucleus</location>
    </subcellularLocation>
    <subcellularLocation>
        <location>Cytoplasm</location>
        <location>Cytoskeleton</location>
    </subcellularLocation>
    <subcellularLocation>
        <location>Chromosome</location>
    </subcellularLocation>
    <text>Colocalizes with chromosomes during mitosis, and in the cytoplasm with cortical actin.</text>
</comment>
<comment type="alternative products">
    <event type="alternative splicing"/>
    <isoform>
        <id>Q9C0C2-1</id>
        <name>1</name>
        <sequence type="displayed"/>
    </isoform>
    <isoform>
        <id>Q9C0C2-2</id>
        <name>2</name>
        <sequence type="described" ref="VSP_026000 VSP_026001 VSP_026002"/>
    </isoform>
</comment>
<comment type="tissue specificity">
    <text>Detected in testis, ovary, lung, skeletal muscle, heart, prostate and pancreas, and at very low levels in brain and peripheral blood leukocytes.</text>
</comment>
<comment type="PTM">
    <text>ADP-ribosylated by TNKS1 (in vitro).</text>
</comment>
<comment type="sequence caution" evidence="6">
    <conflict type="erroneous initiation">
        <sequence resource="EMBL-CDS" id="BAB21832"/>
    </conflict>
    <text>Extended N-terminus.</text>
</comment>
<comment type="sequence caution" evidence="6">
    <conflict type="frameshift">
        <sequence resource="EMBL-CDS" id="BAB84939"/>
    </conflict>
</comment>
<keyword id="KW-0013">ADP-ribosylation</keyword>
<keyword id="KW-0025">Alternative splicing</keyword>
<keyword id="KW-0158">Chromosome</keyword>
<keyword id="KW-0963">Cytoplasm</keyword>
<keyword id="KW-0206">Cytoskeleton</keyword>
<keyword id="KW-0488">Methylation</keyword>
<keyword id="KW-0539">Nucleus</keyword>
<keyword id="KW-0597">Phosphoprotein</keyword>
<keyword id="KW-1267">Proteomics identification</keyword>
<keyword id="KW-1185">Reference proteome</keyword>
<accession>Q9C0C2</accession>
<accession>A7E2F8</accession>
<accession>Q6PJ35</accession>
<accession>Q6ZV74</accession>
<organism>
    <name type="scientific">Homo sapiens</name>
    <name type="common">Human</name>
    <dbReference type="NCBI Taxonomy" id="9606"/>
    <lineage>
        <taxon>Eukaryota</taxon>
        <taxon>Metazoa</taxon>
        <taxon>Chordata</taxon>
        <taxon>Craniata</taxon>
        <taxon>Vertebrata</taxon>
        <taxon>Euteleostomi</taxon>
        <taxon>Mammalia</taxon>
        <taxon>Eutheria</taxon>
        <taxon>Euarchontoglires</taxon>
        <taxon>Primates</taxon>
        <taxon>Haplorrhini</taxon>
        <taxon>Catarrhini</taxon>
        <taxon>Hominidae</taxon>
        <taxon>Homo</taxon>
    </lineage>
</organism>
<sequence length="1729" mass="181796">MKVSTLRESSAMASPLPREMEEELVPTGSEPGDTRAKPPVKPKPRALPAKPALPAKPSLLVPVGPRPPRGPLAELPSARKMNMLAGPQPYGGSKRPLPFAPRPAVEASTGGEATQETGKEEAGKEEPPPLTPPARCAAPGGVRKAPAPFRPASERFAATTVEEILAKMEQPRKEVLASPDRLWGSRLTFNHDGSSRYGPRTYGTTTAPRDEDGSTLFRGWSQEGPVKSPAECREEHSKTPEERSLPSDLAFNGDLAKAASSELPADISKPWIPSSPAPSSENGGPASPGLPAEASGSGPGSPHLHPPDKSSPCHSQLLEAQTPEASQASPCPAVTPSAPSAALPDEGSRHTPSPGLPAEGAPEAPRPSSPPPEVLEPHSLDQPPATSPRPLIEVGELLDLTRTFPSGGEEEAKGDAHLRPTSLVQRRFSEGVLQSPSQDQEKLGGSLAALPQGQGSQLALDRPFGAESNWSLSQSFEWTFPTRPSGLGVWRLDSPPPSPITEASEAAEAAEAGNLAVSSREEGVSQQGQGAGSAPSGSGSSWVQGDDPSMSLTQKGDGESQPQFPAVPLEPLPTTEGTPGLPLQQAEERYESQEPLAGQESPLPLATREAALPILEPVLGQEQPAAPDQPCVLFADAPEPGQALPVEEEAVTLARAETTQARTEAQDLCRASPEPPGPESSSRWLDDLLASPPPSGGGARRGAGAELKDTQSPSTCSEGLLGWSQKDLQSEFGITGDPQPSSFSPSSWCQGASQDYGLGGASPRGDPGLGERDWTSKYGQGAGEGSTREWASRCGIGQEEMEASSSQDQSKVSAPGVLTAQDRVVGKPAQLGTQRSQEADVQDWEFRKRDSQGTYSSRDAELQDQEFGKRDSLGTYSSRDVSLGDWEFGKRDSLGAYASQDANEQGQDLGKRDHHGRYSSQDADEQDWEFQKRDVSLGTYGSRAAEPQEQEFGKSAWIRDYSSGGSSRTLDAQDRSFGTRPLSSGFSPEEAQQQDEEFEKKIPSVEDSLGEGSRDAGRPGERGSGGLFSPSTAHVPDGALGQRDQSSWQNSDASQEVGGHQERQQAGAQGPGSADLEDGEMGKRGWVGEFSLSVGPQREAAFSPGQQDWSRDFCIEASERSYQFGIIGNDRVSGAGFSPSSKMEGGHFVPPGKTTAGSVDWTDQLGLRNLEVSSCVGSGGSSEARESAVGQMGWSGGLSLRDMNLTGCLESGGSEEPGGIGVGEKDWTSDVNVKSKDLAEVGEGGGHSQARESGVGQTDWSGVEAGEFLKSRERGVGQADWTPDLGLRNMAPGAVCSPGESKELGVGQMDWGNNLGLRDLEVTCDPDSGGSQGLRGCGVGQMDWTQDLAPQNVELFGAPSEAREHGVGGVSQCPEPGLRHNGSLSPGLEARDPLEARELGVGETSGPETQGEDYSSSSLEPHPADPGMETGEALSFGASPGRCPARPPPSGSQGLLEEMLAASSSKAVARRESAASGLGGLLEEEGAGAGAAQEEVLEPGRDSPPSWRPQPDGEASQTEDVDGTWGSSAARWSDQGPAQTSRRPSQGPPARSPSQDFSFIEDTEILDSAMYRSRANLGRKRGHRAPVIRPGGTLGLSEAADSDAHLFQDSTEPRASRVPSSDEEVVEEPQSRRTRMSLGTKGLKVNLFPGLSPSALKAKLRPRNRSAEEGELAESKSSQKESAVQRSKSCKVPGLGKPLTLPPKPEKSSGSEGSSPNWLQALKLKKKKV</sequence>
<evidence type="ECO:0000250" key="1">
    <source>
        <dbReference type="UniProtKB" id="P58871"/>
    </source>
</evidence>
<evidence type="ECO:0000255" key="2"/>
<evidence type="ECO:0000256" key="3">
    <source>
        <dbReference type="SAM" id="MobiDB-lite"/>
    </source>
</evidence>
<evidence type="ECO:0000269" key="4">
    <source>
    </source>
</evidence>
<evidence type="ECO:0000303" key="5">
    <source>
    </source>
</evidence>
<evidence type="ECO:0000305" key="6"/>
<evidence type="ECO:0007744" key="7">
    <source>
    </source>
</evidence>
<evidence type="ECO:0007744" key="8">
    <source>
    </source>
</evidence>
<evidence type="ECO:0007744" key="9">
    <source>
    </source>
</evidence>
<evidence type="ECO:0007744" key="10">
    <source>
    </source>
</evidence>
<evidence type="ECO:0007744" key="11">
    <source>
    </source>
</evidence>
<evidence type="ECO:0007744" key="12">
    <source>
    </source>
</evidence>
<evidence type="ECO:0007744" key="13">
    <source>
    </source>
</evidence>
<evidence type="ECO:0007744" key="14">
    <source>
    </source>
</evidence>
<evidence type="ECO:0007744" key="15">
    <source>
    </source>
</evidence>
<evidence type="ECO:0007744" key="16">
    <source>
    </source>
</evidence>
<evidence type="ECO:0007744" key="17">
    <source>
    </source>
</evidence>
<evidence type="ECO:0007744" key="18">
    <source>
    </source>
</evidence>
<proteinExistence type="evidence at protein level"/>
<reference key="1">
    <citation type="journal article" date="2002" name="J. Biol. Chem.">
        <title>The telomeric poly(ADP-ribose) polymerase, tankyrase 1, contains multiple binding sites for telomeric repeat binding factor 1 (TRF1) and a novel acceptor, 182-kDa tankyrase-binding protein (TAB182).</title>
        <authorList>
            <person name="Seimiya H."/>
            <person name="Smith S."/>
        </authorList>
    </citation>
    <scope>NUCLEOTIDE SEQUENCE [MRNA] (ISOFORM 1)</scope>
    <scope>VARIANT SER-322</scope>
    <source>
        <tissue>Placenta</tissue>
        <tissue>Testis</tissue>
    </source>
</reference>
<reference key="2">
    <citation type="journal article" date="2000" name="DNA Res.">
        <title>Prediction of the coding sequences of unidentified human genes. XIX. The complete sequences of 100 new cDNA clones from brain which code for large proteins in vitro.</title>
        <authorList>
            <person name="Nagase T."/>
            <person name="Kikuno R."/>
            <person name="Hattori A."/>
            <person name="Kondo Y."/>
            <person name="Okumura K."/>
            <person name="Ohara O."/>
        </authorList>
    </citation>
    <scope>NUCLEOTIDE SEQUENCE [LARGE SCALE MRNA] (ISOFORM 1)</scope>
    <source>
        <tissue>Brain</tissue>
    </source>
</reference>
<reference key="3">
    <citation type="journal article" date="2002" name="DNA Res.">
        <title>Construction of expression-ready cDNA clones for KIAA genes: manual curation of 330 KIAA cDNA clones.</title>
        <authorList>
            <person name="Nakajima D."/>
            <person name="Okazaki N."/>
            <person name="Yamakawa H."/>
            <person name="Kikuno R."/>
            <person name="Ohara O."/>
            <person name="Nagase T."/>
        </authorList>
    </citation>
    <scope>SEQUENCE REVISION</scope>
</reference>
<reference key="4">
    <citation type="journal article" date="2004" name="Nat. Genet.">
        <title>Complete sequencing and characterization of 21,243 full-length human cDNAs.</title>
        <authorList>
            <person name="Ota T."/>
            <person name="Suzuki Y."/>
            <person name="Nishikawa T."/>
            <person name="Otsuki T."/>
            <person name="Sugiyama T."/>
            <person name="Irie R."/>
            <person name="Wakamatsu A."/>
            <person name="Hayashi K."/>
            <person name="Sato H."/>
            <person name="Nagai K."/>
            <person name="Kimura K."/>
            <person name="Makita H."/>
            <person name="Sekine M."/>
            <person name="Obayashi M."/>
            <person name="Nishi T."/>
            <person name="Shibahara T."/>
            <person name="Tanaka T."/>
            <person name="Ishii S."/>
            <person name="Yamamoto J."/>
            <person name="Saito K."/>
            <person name="Kawai Y."/>
            <person name="Isono Y."/>
            <person name="Nakamura Y."/>
            <person name="Nagahari K."/>
            <person name="Murakami K."/>
            <person name="Yasuda T."/>
            <person name="Iwayanagi T."/>
            <person name="Wagatsuma M."/>
            <person name="Shiratori A."/>
            <person name="Sudo H."/>
            <person name="Hosoiri T."/>
            <person name="Kaku Y."/>
            <person name="Kodaira H."/>
            <person name="Kondo H."/>
            <person name="Sugawara M."/>
            <person name="Takahashi M."/>
            <person name="Kanda K."/>
            <person name="Yokoi T."/>
            <person name="Furuya T."/>
            <person name="Kikkawa E."/>
            <person name="Omura Y."/>
            <person name="Abe K."/>
            <person name="Kamihara K."/>
            <person name="Katsuta N."/>
            <person name="Sato K."/>
            <person name="Tanikawa M."/>
            <person name="Yamazaki M."/>
            <person name="Ninomiya K."/>
            <person name="Ishibashi T."/>
            <person name="Yamashita H."/>
            <person name="Murakawa K."/>
            <person name="Fujimori K."/>
            <person name="Tanai H."/>
            <person name="Kimata M."/>
            <person name="Watanabe M."/>
            <person name="Hiraoka S."/>
            <person name="Chiba Y."/>
            <person name="Ishida S."/>
            <person name="Ono Y."/>
            <person name="Takiguchi S."/>
            <person name="Watanabe S."/>
            <person name="Yosida M."/>
            <person name="Hotuta T."/>
            <person name="Kusano J."/>
            <person name="Kanehori K."/>
            <person name="Takahashi-Fujii A."/>
            <person name="Hara H."/>
            <person name="Tanase T.-O."/>
            <person name="Nomura Y."/>
            <person name="Togiya S."/>
            <person name="Komai F."/>
            <person name="Hara R."/>
            <person name="Takeuchi K."/>
            <person name="Arita M."/>
            <person name="Imose N."/>
            <person name="Musashino K."/>
            <person name="Yuuki H."/>
            <person name="Oshima A."/>
            <person name="Sasaki N."/>
            <person name="Aotsuka S."/>
            <person name="Yoshikawa Y."/>
            <person name="Matsunawa H."/>
            <person name="Ichihara T."/>
            <person name="Shiohata N."/>
            <person name="Sano S."/>
            <person name="Moriya S."/>
            <person name="Momiyama H."/>
            <person name="Satoh N."/>
            <person name="Takami S."/>
            <person name="Terashima Y."/>
            <person name="Suzuki O."/>
            <person name="Nakagawa S."/>
            <person name="Senoh A."/>
            <person name="Mizoguchi H."/>
            <person name="Goto Y."/>
            <person name="Shimizu F."/>
            <person name="Wakebe H."/>
            <person name="Hishigaki H."/>
            <person name="Watanabe T."/>
            <person name="Sugiyama A."/>
            <person name="Takemoto M."/>
            <person name="Kawakami B."/>
            <person name="Yamazaki M."/>
            <person name="Watanabe K."/>
            <person name="Kumagai A."/>
            <person name="Itakura S."/>
            <person name="Fukuzumi Y."/>
            <person name="Fujimori Y."/>
            <person name="Komiyama M."/>
            <person name="Tashiro H."/>
            <person name="Tanigami A."/>
            <person name="Fujiwara T."/>
            <person name="Ono T."/>
            <person name="Yamada K."/>
            <person name="Fujii Y."/>
            <person name="Ozaki K."/>
            <person name="Hirao M."/>
            <person name="Ohmori Y."/>
            <person name="Kawabata A."/>
            <person name="Hikiji T."/>
            <person name="Kobatake N."/>
            <person name="Inagaki H."/>
            <person name="Ikema Y."/>
            <person name="Okamoto S."/>
            <person name="Okitani R."/>
            <person name="Kawakami T."/>
            <person name="Noguchi S."/>
            <person name="Itoh T."/>
            <person name="Shigeta K."/>
            <person name="Senba T."/>
            <person name="Matsumura K."/>
            <person name="Nakajima Y."/>
            <person name="Mizuno T."/>
            <person name="Morinaga M."/>
            <person name="Sasaki M."/>
            <person name="Togashi T."/>
            <person name="Oyama M."/>
            <person name="Hata H."/>
            <person name="Watanabe M."/>
            <person name="Komatsu T."/>
            <person name="Mizushima-Sugano J."/>
            <person name="Satoh T."/>
            <person name="Shirai Y."/>
            <person name="Takahashi Y."/>
            <person name="Nakagawa K."/>
            <person name="Okumura K."/>
            <person name="Nagase T."/>
            <person name="Nomura N."/>
            <person name="Kikuchi H."/>
            <person name="Masuho Y."/>
            <person name="Yamashita R."/>
            <person name="Nakai K."/>
            <person name="Yada T."/>
            <person name="Nakamura Y."/>
            <person name="Ohara O."/>
            <person name="Isogai T."/>
            <person name="Sugano S."/>
        </authorList>
    </citation>
    <scope>NUCLEOTIDE SEQUENCE [LARGE SCALE MRNA] (ISOFORM 2)</scope>
    <source>
        <tissue>Hippocampus</tissue>
    </source>
</reference>
<reference key="5">
    <citation type="journal article" date="2006" name="Nature">
        <title>Human chromosome 11 DNA sequence and analysis including novel gene identification.</title>
        <authorList>
            <person name="Taylor T.D."/>
            <person name="Noguchi H."/>
            <person name="Totoki Y."/>
            <person name="Toyoda A."/>
            <person name="Kuroki Y."/>
            <person name="Dewar K."/>
            <person name="Lloyd C."/>
            <person name="Itoh T."/>
            <person name="Takeda T."/>
            <person name="Kim D.-W."/>
            <person name="She X."/>
            <person name="Barlow K.F."/>
            <person name="Bloom T."/>
            <person name="Bruford E."/>
            <person name="Chang J.L."/>
            <person name="Cuomo C.A."/>
            <person name="Eichler E."/>
            <person name="FitzGerald M.G."/>
            <person name="Jaffe D.B."/>
            <person name="LaButti K."/>
            <person name="Nicol R."/>
            <person name="Park H.-S."/>
            <person name="Seaman C."/>
            <person name="Sougnez C."/>
            <person name="Yang X."/>
            <person name="Zimmer A.R."/>
            <person name="Zody M.C."/>
            <person name="Birren B.W."/>
            <person name="Nusbaum C."/>
            <person name="Fujiyama A."/>
            <person name="Hattori M."/>
            <person name="Rogers J."/>
            <person name="Lander E.S."/>
            <person name="Sakaki Y."/>
        </authorList>
    </citation>
    <scope>NUCLEOTIDE SEQUENCE [LARGE SCALE GENOMIC DNA]</scope>
</reference>
<reference key="6">
    <citation type="submission" date="2005-07" db="EMBL/GenBank/DDBJ databases">
        <authorList>
            <person name="Mural R.J."/>
            <person name="Istrail S."/>
            <person name="Sutton G.G."/>
            <person name="Florea L."/>
            <person name="Halpern A.L."/>
            <person name="Mobarry C.M."/>
            <person name="Lippert R."/>
            <person name="Walenz B."/>
            <person name="Shatkay H."/>
            <person name="Dew I."/>
            <person name="Miller J.R."/>
            <person name="Flanigan M.J."/>
            <person name="Edwards N.J."/>
            <person name="Bolanos R."/>
            <person name="Fasulo D."/>
            <person name="Halldorsson B.V."/>
            <person name="Hannenhalli S."/>
            <person name="Turner R."/>
            <person name="Yooseph S."/>
            <person name="Lu F."/>
            <person name="Nusskern D.R."/>
            <person name="Shue B.C."/>
            <person name="Zheng X.H."/>
            <person name="Zhong F."/>
            <person name="Delcher A.L."/>
            <person name="Huson D.H."/>
            <person name="Kravitz S.A."/>
            <person name="Mouchard L."/>
            <person name="Reinert K."/>
            <person name="Remington K.A."/>
            <person name="Clark A.G."/>
            <person name="Waterman M.S."/>
            <person name="Eichler E.E."/>
            <person name="Adams M.D."/>
            <person name="Hunkapiller M.W."/>
            <person name="Myers E.W."/>
            <person name="Venter J.C."/>
        </authorList>
    </citation>
    <scope>NUCLEOTIDE SEQUENCE [LARGE SCALE GENOMIC DNA]</scope>
</reference>
<reference key="7">
    <citation type="journal article" date="2004" name="Genome Res.">
        <title>The status, quality, and expansion of the NIH full-length cDNA project: the Mammalian Gene Collection (MGC).</title>
        <authorList>
            <consortium name="The MGC Project Team"/>
        </authorList>
    </citation>
    <scope>NUCLEOTIDE SEQUENCE [LARGE SCALE MRNA] (ISOFORM 1)</scope>
    <source>
        <tissue>Skin</tissue>
    </source>
</reference>
<reference key="8">
    <citation type="journal article" date="2003" name="DNA Res.">
        <title>Characterization of long cDNA clones from human adult spleen. II. The complete sequences of 81 cDNA clones.</title>
        <authorList>
            <person name="Jikuya H."/>
            <person name="Takano J."/>
            <person name="Kikuno R."/>
            <person name="Hirosawa M."/>
            <person name="Nagase T."/>
            <person name="Nomura N."/>
            <person name="Ohara O."/>
        </authorList>
    </citation>
    <scope>NUCLEOTIDE SEQUENCE [LARGE SCALE MRNA] OF 495-1729 (ISOFORM 1)</scope>
    <source>
        <tissue>Spleen</tissue>
    </source>
</reference>
<reference key="9">
    <citation type="journal article" date="2006" name="Cell">
        <title>Global, in vivo, and site-specific phosphorylation dynamics in signaling networks.</title>
        <authorList>
            <person name="Olsen J.V."/>
            <person name="Blagoev B."/>
            <person name="Gnad F."/>
            <person name="Macek B."/>
            <person name="Kumar C."/>
            <person name="Mortensen P."/>
            <person name="Mann M."/>
        </authorList>
    </citation>
    <scope>PHOSPHORYLATION [LARGE SCALE ANALYSIS] AT SER-672; THR-833; SER-836; SER-1383; SER-1385 AND SER-1666</scope>
    <scope>IDENTIFICATION BY MASS SPECTROMETRY [LARGE SCALE ANALYSIS]</scope>
    <source>
        <tissue>Cervix carcinoma</tissue>
    </source>
</reference>
<reference key="10">
    <citation type="journal article" date="2006" name="Nat. Biotechnol.">
        <title>A probability-based approach for high-throughput protein phosphorylation analysis and site localization.</title>
        <authorList>
            <person name="Beausoleil S.A."/>
            <person name="Villen J."/>
            <person name="Gerber S.A."/>
            <person name="Rush J."/>
            <person name="Gygi S.P."/>
        </authorList>
    </citation>
    <scope>PHOSPHORYLATION [LARGE SCALE ANALYSIS] AT SER-691; SER-695; SER-836; SER-1103; SER-1138; SER-1620; SER-1621 AND SER-1666</scope>
    <scope>IDENTIFICATION BY MASS SPECTROMETRY [LARGE SCALE ANALYSIS]</scope>
    <source>
        <tissue>Cervix carcinoma</tissue>
    </source>
</reference>
<reference key="11">
    <citation type="journal article" date="2007" name="Electrophoresis">
        <title>Toward a global characterization of the phosphoproteome in prostate cancer cells: identification of phosphoproteins in the LNCaP cell line.</title>
        <authorList>
            <person name="Giorgianni F."/>
            <person name="Zhao Y."/>
            <person name="Desiderio D.M."/>
            <person name="Beranova-Giorgianni S."/>
        </authorList>
    </citation>
    <scope>IDENTIFICATION BY MASS SPECTROMETRY [LARGE SCALE ANALYSIS]</scope>
    <source>
        <tissue>Prostate cancer</tissue>
    </source>
</reference>
<reference key="12">
    <citation type="journal article" date="2007" name="Science">
        <title>ATM and ATR substrate analysis reveals extensive protein networks responsive to DNA damage.</title>
        <authorList>
            <person name="Matsuoka S."/>
            <person name="Ballif B.A."/>
            <person name="Smogorzewska A."/>
            <person name="McDonald E.R. III"/>
            <person name="Hurov K.E."/>
            <person name="Luo J."/>
            <person name="Bakalarski C.E."/>
            <person name="Zhao Z."/>
            <person name="Solimini N."/>
            <person name="Lerenthal Y."/>
            <person name="Shiloh Y."/>
            <person name="Gygi S.P."/>
            <person name="Elledge S.J."/>
        </authorList>
    </citation>
    <scope>PHOSPHORYLATION [LARGE SCALE ANALYSIS] AT SER-836; SER-1248 AND SER-1331</scope>
    <scope>IDENTIFICATION BY MASS SPECTROMETRY [LARGE SCALE ANALYSIS]</scope>
    <source>
        <tissue>Embryonic kidney</tissue>
    </source>
</reference>
<reference key="13">
    <citation type="journal article" date="2008" name="J. Proteome Res.">
        <title>Combining protein-based IMAC, peptide-based IMAC, and MudPIT for efficient phosphoproteomic analysis.</title>
        <authorList>
            <person name="Cantin G.T."/>
            <person name="Yi W."/>
            <person name="Lu B."/>
            <person name="Park S.K."/>
            <person name="Xu T."/>
            <person name="Lee J.-D."/>
            <person name="Yates J.R. III"/>
        </authorList>
    </citation>
    <scope>IDENTIFICATION BY MASS SPECTROMETRY [LARGE SCALE ANALYSIS]</scope>
    <source>
        <tissue>Cervix carcinoma</tissue>
    </source>
</reference>
<reference key="14">
    <citation type="journal article" date="2008" name="Mol. Cell">
        <title>Kinase-selective enrichment enables quantitative phosphoproteomics of the kinome across the cell cycle.</title>
        <authorList>
            <person name="Daub H."/>
            <person name="Olsen J.V."/>
            <person name="Bairlein M."/>
            <person name="Gnad F."/>
            <person name="Oppermann F.S."/>
            <person name="Korner R."/>
            <person name="Greff Z."/>
            <person name="Keri G."/>
            <person name="Stemmann O."/>
            <person name="Mann M."/>
        </authorList>
    </citation>
    <scope>PHOSPHORYLATION [LARGE SCALE ANALYSIS] AT SER-601; SER-691; SER-836 AND SER-1103</scope>
    <scope>IDENTIFICATION BY MASS SPECTROMETRY [LARGE SCALE ANALYSIS]</scope>
    <source>
        <tissue>Cervix carcinoma</tissue>
    </source>
</reference>
<reference key="15">
    <citation type="journal article" date="2008" name="Proc. Natl. Acad. Sci. U.S.A.">
        <title>A quantitative atlas of mitotic phosphorylation.</title>
        <authorList>
            <person name="Dephoure N."/>
            <person name="Zhou C."/>
            <person name="Villen J."/>
            <person name="Beausoleil S.A."/>
            <person name="Bakalarski C.E."/>
            <person name="Elledge S.J."/>
            <person name="Gygi S.P."/>
        </authorList>
    </citation>
    <scope>PHOSPHORYLATION [LARGE SCALE ANALYSIS] AT SER-178; THR-239; SER-287; SER-429; SER-435; SER-494; SER-498; SER-601; SER-672; SER-712; SER-744; SER-762; SER-872; SER-877; SER-893; SER-920; SER-936; THR-979; SER-983; SER-987; SER-1008; SER-1029; SER-1103; SER-1133; SER-1138; SER-1178; SER-1297; SER-1328; SER-1331; SER-1439; SER-1533; SER-1545; SER-1558; THR-1563; SER-1620; SER-1621; SER-1652 AND SER-1666</scope>
    <scope>IDENTIFICATION BY MASS SPECTROMETRY [LARGE SCALE ANALYSIS]</scope>
    <source>
        <tissue>Cervix carcinoma</tissue>
    </source>
</reference>
<reference key="16">
    <citation type="journal article" date="2008" name="Proteomics">
        <title>Large-scale phosphoproteome analysis of human liver tissue by enrichment and fractionation of phosphopeptides with strong anion exchange chromatography.</title>
        <authorList>
            <person name="Han G."/>
            <person name="Ye M."/>
            <person name="Zhou H."/>
            <person name="Jiang X."/>
            <person name="Feng S."/>
            <person name="Jiang X."/>
            <person name="Tian R."/>
            <person name="Wan D."/>
            <person name="Zou H."/>
            <person name="Gu J."/>
        </authorList>
    </citation>
    <scope>IDENTIFICATION BY MASS SPECTROMETRY [LARGE SCALE ANALYSIS]</scope>
    <source>
        <tissue>Liver</tissue>
    </source>
</reference>
<reference key="17">
    <citation type="journal article" date="2009" name="Anal. Chem.">
        <title>Lys-N and trypsin cover complementary parts of the phosphoproteome in a refined SCX-based approach.</title>
        <authorList>
            <person name="Gauci S."/>
            <person name="Helbig A.O."/>
            <person name="Slijper M."/>
            <person name="Krijgsveld J."/>
            <person name="Heck A.J."/>
            <person name="Mohammed S."/>
        </authorList>
    </citation>
    <scope>IDENTIFICATION BY MASS SPECTROMETRY [LARGE SCALE ANALYSIS]</scope>
</reference>
<reference key="18">
    <citation type="journal article" date="2009" name="Mol. Cell. Proteomics">
        <title>Large-scale proteomics analysis of the human kinome.</title>
        <authorList>
            <person name="Oppermann F.S."/>
            <person name="Gnad F."/>
            <person name="Olsen J.V."/>
            <person name="Hornberger R."/>
            <person name="Greff Z."/>
            <person name="Keri G."/>
            <person name="Mann M."/>
            <person name="Daub H."/>
        </authorList>
    </citation>
    <scope>PHOSPHORYLATION [LARGE SCALE ANALYSIS] AT SER-691</scope>
    <scope>IDENTIFICATION BY MASS SPECTROMETRY [LARGE SCALE ANALYSIS]</scope>
</reference>
<reference key="19">
    <citation type="journal article" date="2009" name="Sci. Signal.">
        <title>Quantitative phosphoproteomic analysis of T cell receptor signaling reveals system-wide modulation of protein-protein interactions.</title>
        <authorList>
            <person name="Mayya V."/>
            <person name="Lundgren D.H."/>
            <person name="Hwang S.-I."/>
            <person name="Rezaul K."/>
            <person name="Wu L."/>
            <person name="Eng J.K."/>
            <person name="Rodionov V."/>
            <person name="Han D.K."/>
        </authorList>
    </citation>
    <scope>PHOSPHORYLATION [LARGE SCALE ANALYSIS] AT SER-429; SER-494; SER-691; SER-836; SER-1620; SER-1621 AND SER-1666</scope>
    <scope>IDENTIFICATION BY MASS SPECTROMETRY [LARGE SCALE ANALYSIS]</scope>
    <source>
        <tissue>Leukemic T-cell</tissue>
    </source>
</reference>
<reference key="20">
    <citation type="journal article" date="2010" name="Sci. Signal.">
        <title>Quantitative phosphoproteomics reveals widespread full phosphorylation site occupancy during mitosis.</title>
        <authorList>
            <person name="Olsen J.V."/>
            <person name="Vermeulen M."/>
            <person name="Santamaria A."/>
            <person name="Kumar C."/>
            <person name="Miller M.L."/>
            <person name="Jensen L.J."/>
            <person name="Gnad F."/>
            <person name="Cox J."/>
            <person name="Jensen T.S."/>
            <person name="Nigg E.A."/>
            <person name="Brunak S."/>
            <person name="Mann M."/>
        </authorList>
    </citation>
    <scope>PHOSPHORYLATION [LARGE SCALE ANALYSIS] AT SER-178; SER-221; SER-429; SER-435; SER-437; SER-601; SER-672; SER-691; SER-762; SER-836; SER-872; SER-882; SER-893; SER-987; SER-1008; SER-1024; SER-1103; SER-1133; SER-1138; SER-1248; SER-1253; THR-1282; SER-1297; SER-1383; SER-1385; SER-1533; SER-1620; SER-1621; SER-1652; SER-1666 AND SER-1715</scope>
    <scope>IDENTIFICATION BY MASS SPECTROMETRY [LARGE SCALE ANALYSIS]</scope>
    <source>
        <tissue>Cervix carcinoma</tissue>
    </source>
</reference>
<reference key="21">
    <citation type="journal article" date="2011" name="BMC Syst. Biol.">
        <title>Initial characterization of the human central proteome.</title>
        <authorList>
            <person name="Burkard T.R."/>
            <person name="Planyavsky M."/>
            <person name="Kaupe I."/>
            <person name="Breitwieser F.P."/>
            <person name="Buerckstuemmer T."/>
            <person name="Bennett K.L."/>
            <person name="Superti-Furga G."/>
            <person name="Colinge J."/>
        </authorList>
    </citation>
    <scope>IDENTIFICATION BY MASS SPECTROMETRY [LARGE SCALE ANALYSIS]</scope>
</reference>
<reference key="22">
    <citation type="journal article" date="2011" name="Sci. Signal.">
        <title>System-wide temporal characterization of the proteome and phosphoproteome of human embryonic stem cell differentiation.</title>
        <authorList>
            <person name="Rigbolt K.T."/>
            <person name="Prokhorova T.A."/>
            <person name="Akimov V."/>
            <person name="Henningsen J."/>
            <person name="Johansen P.T."/>
            <person name="Kratchmarova I."/>
            <person name="Kassem M."/>
            <person name="Mann M."/>
            <person name="Olsen J.V."/>
            <person name="Blagoev B."/>
        </authorList>
    </citation>
    <scope>PHOSPHORYLATION [LARGE SCALE ANALYSIS] AT SER-429; SER-601; SER-672; SER-691; SER-836; SER-851; SER-872; SER-893; SER-899; SER-1054; SER-1138; SER-1385; SER-1533; SER-1545; SER-1620; SER-1621; SER-1631 AND SER-1666</scope>
    <scope>IDENTIFICATION BY MASS SPECTROMETRY [LARGE SCALE ANALYSIS]</scope>
</reference>
<reference key="23">
    <citation type="journal article" date="2012" name="Proc. Natl. Acad. Sci. U.S.A.">
        <title>N-terminal acetylome analyses and functional insights of the N-terminal acetyltransferase NatB.</title>
        <authorList>
            <person name="Van Damme P."/>
            <person name="Lasa M."/>
            <person name="Polevoda B."/>
            <person name="Gazquez C."/>
            <person name="Elosegui-Artola A."/>
            <person name="Kim D.S."/>
            <person name="De Juan-Pardo E."/>
            <person name="Demeyer K."/>
            <person name="Hole K."/>
            <person name="Larrea E."/>
            <person name="Timmerman E."/>
            <person name="Prieto J."/>
            <person name="Arnesen T."/>
            <person name="Sherman F."/>
            <person name="Gevaert K."/>
            <person name="Aldabe R."/>
        </authorList>
    </citation>
    <scope>IDENTIFICATION BY MASS SPECTROMETRY [LARGE SCALE ANALYSIS]</scope>
</reference>
<reference key="24">
    <citation type="journal article" date="2013" name="J. Proteome Res.">
        <title>Toward a comprehensive characterization of a human cancer cell phosphoproteome.</title>
        <authorList>
            <person name="Zhou H."/>
            <person name="Di Palma S."/>
            <person name="Preisinger C."/>
            <person name="Peng M."/>
            <person name="Polat A.N."/>
            <person name="Heck A.J."/>
            <person name="Mohammed S."/>
        </authorList>
    </citation>
    <scope>PHOSPHORYLATION [LARGE SCALE ANALYSIS] AT SER-14; SER-178; SER-228; SER-429; SER-435; SER-437; SER-494; SER-601; SER-672; SER-691; SER-836; SER-872; SER-882; SER-893; SER-899; SER-920; SER-936; SER-987; SER-1013; SER-1024; SER-1029; SER-1054; SER-1073; SER-1103; SER-1138; SER-1158; THR-1282; SER-1297; SER-1383; SER-1385; SER-1533; SER-1620; SER-1621; SER-1652; SER-1666 AND SER-1715</scope>
    <scope>IDENTIFICATION BY MASS SPECTROMETRY [LARGE SCALE ANALYSIS]</scope>
    <source>
        <tissue>Cervix carcinoma</tissue>
        <tissue>Erythroleukemia</tissue>
    </source>
</reference>
<reference key="25">
    <citation type="journal article" date="2014" name="J. Proteomics">
        <title>An enzyme assisted RP-RPLC approach for in-depth analysis of human liver phosphoproteome.</title>
        <authorList>
            <person name="Bian Y."/>
            <person name="Song C."/>
            <person name="Cheng K."/>
            <person name="Dong M."/>
            <person name="Wang F."/>
            <person name="Huang J."/>
            <person name="Sun D."/>
            <person name="Wang L."/>
            <person name="Ye M."/>
            <person name="Zou H."/>
        </authorList>
    </citation>
    <scope>PHOSPHORYLATION [LARGE SCALE ANALYSIS] AT THR-131; SER-221; SER-228; SER-301; SER-429; SER-494; SER-498; SER-601; SER-672; SER-691; SER-724; SER-762; SER-806; SER-836; SER-893; TYR-897; SER-976; SER-1004; SER-1008; SER-1024; SER-1073; SER-1091; SER-1103; SER-1138; SER-1158; THR-1282; SER-1297; SER-1435; SER-1439; SER-1450; SER-1452; SER-1473; SER-1476; SER-1503; SER-1506; THR-1518; SER-1533; SER-1545; SER-1620 AND SER-1621</scope>
    <scope>IDENTIFICATION BY MASS SPECTROMETRY [LARGE SCALE ANALYSIS]</scope>
    <source>
        <tissue>Liver</tissue>
    </source>
</reference>
<reference key="26">
    <citation type="journal article" date="2014" name="Mol. Cell. Proteomics">
        <title>Immunoaffinity enrichment and mass spectrometry analysis of protein methylation.</title>
        <authorList>
            <person name="Guo A."/>
            <person name="Gu H."/>
            <person name="Zhou J."/>
            <person name="Mulhern D."/>
            <person name="Wang Y."/>
            <person name="Lee K.A."/>
            <person name="Yang V."/>
            <person name="Aguiar M."/>
            <person name="Kornhauser J."/>
            <person name="Jia X."/>
            <person name="Ren J."/>
            <person name="Beausoleil S.A."/>
            <person name="Silva J.C."/>
            <person name="Vemulapalli V."/>
            <person name="Bedford M.T."/>
            <person name="Comb M.J."/>
        </authorList>
    </citation>
    <scope>METHYLATION [LARGE SCALE ANALYSIS] AT LYS-1644</scope>
    <scope>IDENTIFICATION BY MASS SPECTROMETRY [LARGE SCALE ANALYSIS]</scope>
    <source>
        <tissue>Colon carcinoma</tissue>
    </source>
</reference>
<gene>
    <name type="primary">TNKS1BP1</name>
    <name type="synonym">KIAA1741</name>
    <name type="synonym">TAB182</name>
</gene>
<dbReference type="EMBL" id="AF441771">
    <property type="protein sequence ID" value="AAM15531.1"/>
    <property type="molecule type" value="mRNA"/>
</dbReference>
<dbReference type="EMBL" id="AB051528">
    <property type="protein sequence ID" value="BAB21832.2"/>
    <property type="status" value="ALT_INIT"/>
    <property type="molecule type" value="mRNA"/>
</dbReference>
<dbReference type="EMBL" id="AK124903">
    <property type="protein sequence ID" value="BAC85989.1"/>
    <property type="molecule type" value="mRNA"/>
</dbReference>
<dbReference type="EMBL" id="AP000781">
    <property type="status" value="NOT_ANNOTATED_CDS"/>
    <property type="molecule type" value="Genomic_DNA"/>
</dbReference>
<dbReference type="EMBL" id="CH471076">
    <property type="protein sequence ID" value="EAW73731.1"/>
    <property type="molecule type" value="Genomic_DNA"/>
</dbReference>
<dbReference type="EMBL" id="BC023622">
    <property type="protein sequence ID" value="AAH23622.1"/>
    <property type="molecule type" value="mRNA"/>
</dbReference>
<dbReference type="EMBL" id="BC150333">
    <property type="protein sequence ID" value="AAI50334.1"/>
    <property type="molecule type" value="mRNA"/>
</dbReference>
<dbReference type="EMBL" id="AK074113">
    <property type="protein sequence ID" value="BAB84939.1"/>
    <property type="status" value="ALT_FRAME"/>
    <property type="molecule type" value="mRNA"/>
</dbReference>
<dbReference type="CCDS" id="CCDS7951.1">
    <molecule id="Q9C0C2-1"/>
</dbReference>
<dbReference type="RefSeq" id="NP_203754.2">
    <molecule id="Q9C0C2-1"/>
    <property type="nucleotide sequence ID" value="NM_033396.3"/>
</dbReference>
<dbReference type="RefSeq" id="XP_006718788.1">
    <molecule id="Q9C0C2-1"/>
    <property type="nucleotide sequence ID" value="XM_006718725.4"/>
</dbReference>
<dbReference type="BioGRID" id="124540">
    <property type="interactions" value="174"/>
</dbReference>
<dbReference type="ComplexPortal" id="CPX-2522">
    <property type="entry name" value="CCR4-NOT mRNA deadenylase complex, CNOT6L-CNOT7 variant"/>
</dbReference>
<dbReference type="ComplexPortal" id="CPX-2535">
    <property type="entry name" value="CCR4-NOT mRNA deadenylase complex, CNOT6L-CNOT8 variant"/>
</dbReference>
<dbReference type="ComplexPortal" id="CPX-2849">
    <property type="entry name" value="CCR4-NOT mRNA deadenylase complex, CNOT6-CNOT8 variant"/>
</dbReference>
<dbReference type="ComplexPortal" id="CPX-707">
    <property type="entry name" value="CCR4-NOT mRNA deadenylase complex, CNOT6-CNOT7 variant"/>
</dbReference>
<dbReference type="CORUM" id="Q9C0C2"/>
<dbReference type="ELM" id="Q9C0C2"/>
<dbReference type="FunCoup" id="Q9C0C2">
    <property type="interactions" value="170"/>
</dbReference>
<dbReference type="IntAct" id="Q9C0C2">
    <property type="interactions" value="82"/>
</dbReference>
<dbReference type="MINT" id="Q9C0C2"/>
<dbReference type="STRING" id="9606.ENSP00000437271"/>
<dbReference type="ChEMBL" id="CHEMBL4295939"/>
<dbReference type="GlyCosmos" id="Q9C0C2">
    <property type="glycosylation" value="1 site, 1 glycan"/>
</dbReference>
<dbReference type="GlyGen" id="Q9C0C2">
    <property type="glycosylation" value="5 sites, 1 O-linked glycan (4 sites)"/>
</dbReference>
<dbReference type="iPTMnet" id="Q9C0C2"/>
<dbReference type="MetOSite" id="Q9C0C2"/>
<dbReference type="PhosphoSitePlus" id="Q9C0C2"/>
<dbReference type="SwissPalm" id="Q9C0C2"/>
<dbReference type="BioMuta" id="TNKS1BP1"/>
<dbReference type="DMDM" id="317373547"/>
<dbReference type="CPTAC" id="CPTAC-1012"/>
<dbReference type="CPTAC" id="CPTAC-1013"/>
<dbReference type="jPOST" id="Q9C0C2"/>
<dbReference type="MassIVE" id="Q9C0C2"/>
<dbReference type="PaxDb" id="9606-ENSP00000437271"/>
<dbReference type="PeptideAtlas" id="Q9C0C2"/>
<dbReference type="ProteomicsDB" id="79995">
    <molecule id="Q9C0C2-1"/>
</dbReference>
<dbReference type="ProteomicsDB" id="79996">
    <molecule id="Q9C0C2-2"/>
</dbReference>
<dbReference type="Pumba" id="Q9C0C2"/>
<dbReference type="Antibodypedia" id="27306">
    <property type="antibodies" value="206 antibodies from 26 providers"/>
</dbReference>
<dbReference type="DNASU" id="85456"/>
<dbReference type="Ensembl" id="ENST00000358252.8">
    <molecule id="Q9C0C2-1"/>
    <property type="protein sequence ID" value="ENSP00000350990.3"/>
    <property type="gene ID" value="ENSG00000149115.14"/>
</dbReference>
<dbReference type="Ensembl" id="ENST00000532437.1">
    <molecule id="Q9C0C2-1"/>
    <property type="protein sequence ID" value="ENSP00000437271.1"/>
    <property type="gene ID" value="ENSG00000149115.14"/>
</dbReference>
<dbReference type="GeneID" id="85456"/>
<dbReference type="KEGG" id="hsa:85456"/>
<dbReference type="MANE-Select" id="ENST00000358252.8">
    <property type="protein sequence ID" value="ENSP00000350990.3"/>
    <property type="RefSeq nucleotide sequence ID" value="NM_033396.3"/>
    <property type="RefSeq protein sequence ID" value="NP_203754.2"/>
</dbReference>
<dbReference type="UCSC" id="uc001njr.4">
    <molecule id="Q9C0C2-1"/>
    <property type="organism name" value="human"/>
</dbReference>
<dbReference type="AGR" id="HGNC:19081"/>
<dbReference type="CTD" id="85456"/>
<dbReference type="DisGeNET" id="85456"/>
<dbReference type="GeneCards" id="TNKS1BP1"/>
<dbReference type="HGNC" id="HGNC:19081">
    <property type="gene designation" value="TNKS1BP1"/>
</dbReference>
<dbReference type="HPA" id="ENSG00000149115">
    <property type="expression patterns" value="Low tissue specificity"/>
</dbReference>
<dbReference type="MIM" id="607104">
    <property type="type" value="gene"/>
</dbReference>
<dbReference type="neXtProt" id="NX_Q9C0C2"/>
<dbReference type="OpenTargets" id="ENSG00000149115"/>
<dbReference type="PharmGKB" id="PA38789"/>
<dbReference type="VEuPathDB" id="HostDB:ENSG00000149115"/>
<dbReference type="eggNOG" id="ENOG502QSXZ">
    <property type="taxonomic scope" value="Eukaryota"/>
</dbReference>
<dbReference type="GeneTree" id="ENSGT00940000154184"/>
<dbReference type="HOGENOM" id="CLU_003005_0_0_1"/>
<dbReference type="InParanoid" id="Q9C0C2"/>
<dbReference type="OMA" id="PNQAREC"/>
<dbReference type="OrthoDB" id="9943385at2759"/>
<dbReference type="PAN-GO" id="Q9C0C2">
    <property type="GO annotations" value="4 GO annotations based on evolutionary models"/>
</dbReference>
<dbReference type="PhylomeDB" id="Q9C0C2"/>
<dbReference type="TreeFam" id="TF336029"/>
<dbReference type="PathwayCommons" id="Q9C0C2"/>
<dbReference type="Reactome" id="R-HSA-429947">
    <property type="pathway name" value="Deadenylation of mRNA"/>
</dbReference>
<dbReference type="Reactome" id="R-HSA-6804115">
    <property type="pathway name" value="TP53 regulates transcription of additional cell cycle genes whose exact role in the p53 pathway remain uncertain"/>
</dbReference>
<dbReference type="Reactome" id="R-HSA-9820841">
    <property type="pathway name" value="M-decay: degradation of maternal mRNAs by maternally stored factors"/>
</dbReference>
<dbReference type="SignaLink" id="Q9C0C2"/>
<dbReference type="SIGNOR" id="Q9C0C2"/>
<dbReference type="BioGRID-ORCS" id="85456">
    <property type="hits" value="17 hits in 1164 CRISPR screens"/>
</dbReference>
<dbReference type="CD-CODE" id="232F8A39">
    <property type="entry name" value="P-body"/>
</dbReference>
<dbReference type="CD-CODE" id="DEE660B4">
    <property type="entry name" value="Stress granule"/>
</dbReference>
<dbReference type="ChiTaRS" id="TNKS1BP1">
    <property type="organism name" value="human"/>
</dbReference>
<dbReference type="GeneWiki" id="TNKS1BP1"/>
<dbReference type="GenomeRNAi" id="85456"/>
<dbReference type="Pharos" id="Q9C0C2">
    <property type="development level" value="Tbio"/>
</dbReference>
<dbReference type="PRO" id="PR:Q9C0C2"/>
<dbReference type="Proteomes" id="UP000005640">
    <property type="component" value="Chromosome 11"/>
</dbReference>
<dbReference type="RNAct" id="Q9C0C2">
    <property type="molecule type" value="protein"/>
</dbReference>
<dbReference type="Bgee" id="ENSG00000149115">
    <property type="expression patterns" value="Expressed in lower esophagus mucosa and 164 other cell types or tissues"/>
</dbReference>
<dbReference type="ExpressionAtlas" id="Q9C0C2">
    <property type="expression patterns" value="baseline and differential"/>
</dbReference>
<dbReference type="GO" id="GO:0005912">
    <property type="term" value="C:adherens junction"/>
    <property type="evidence" value="ECO:0000314"/>
    <property type="project" value="BHF-UCL"/>
</dbReference>
<dbReference type="GO" id="GO:0030014">
    <property type="term" value="C:CCR4-NOT complex"/>
    <property type="evidence" value="ECO:0000314"/>
    <property type="project" value="UniProtKB"/>
</dbReference>
<dbReference type="GO" id="GO:0005737">
    <property type="term" value="C:cytoplasm"/>
    <property type="evidence" value="ECO:0000314"/>
    <property type="project" value="UniProtKB"/>
</dbReference>
<dbReference type="GO" id="GO:0005856">
    <property type="term" value="C:cytoskeleton"/>
    <property type="evidence" value="ECO:0007669"/>
    <property type="project" value="UniProtKB-SubCell"/>
</dbReference>
<dbReference type="GO" id="GO:0005829">
    <property type="term" value="C:cytosol"/>
    <property type="evidence" value="ECO:0000304"/>
    <property type="project" value="Reactome"/>
</dbReference>
<dbReference type="GO" id="GO:0000792">
    <property type="term" value="C:heterochromatin"/>
    <property type="evidence" value="ECO:0000314"/>
    <property type="project" value="UniProtKB"/>
</dbReference>
<dbReference type="GO" id="GO:0005634">
    <property type="term" value="C:nucleus"/>
    <property type="evidence" value="ECO:0000314"/>
    <property type="project" value="UniProtKB"/>
</dbReference>
<dbReference type="GO" id="GO:0071532">
    <property type="term" value="F:ankyrin repeat binding"/>
    <property type="evidence" value="ECO:0000315"/>
    <property type="project" value="UniProtKB"/>
</dbReference>
<dbReference type="GO" id="GO:0045296">
    <property type="term" value="F:cadherin binding"/>
    <property type="evidence" value="ECO:0007005"/>
    <property type="project" value="BHF-UCL"/>
</dbReference>
<dbReference type="GO" id="GO:0019899">
    <property type="term" value="F:enzyme binding"/>
    <property type="evidence" value="ECO:0000314"/>
    <property type="project" value="UniProtKB"/>
</dbReference>
<dbReference type="GO" id="GO:0043539">
    <property type="term" value="F:protein serine/threonine kinase activator activity"/>
    <property type="evidence" value="ECO:0000315"/>
    <property type="project" value="BHF-UCL"/>
</dbReference>
<dbReference type="GO" id="GO:0044877">
    <property type="term" value="F:protein-containing complex binding"/>
    <property type="evidence" value="ECO:0000353"/>
    <property type="project" value="BHF-UCL"/>
</dbReference>
<dbReference type="GO" id="GO:0071479">
    <property type="term" value="P:cellular response to ionizing radiation"/>
    <property type="evidence" value="ECO:0000315"/>
    <property type="project" value="BHF-UCL"/>
</dbReference>
<dbReference type="GO" id="GO:0006302">
    <property type="term" value="P:double-strand break repair"/>
    <property type="evidence" value="ECO:0000315"/>
    <property type="project" value="BHF-UCL"/>
</dbReference>
<dbReference type="GO" id="GO:0000289">
    <property type="term" value="P:nuclear-transcribed mRNA poly(A) tail shortening"/>
    <property type="evidence" value="ECO:0000303"/>
    <property type="project" value="ComplexPortal"/>
</dbReference>
<dbReference type="GO" id="GO:0007004">
    <property type="term" value="P:telomere maintenance via telomerase"/>
    <property type="evidence" value="ECO:0000303"/>
    <property type="project" value="UniProtKB"/>
</dbReference>
<dbReference type="InterPro" id="IPR032764">
    <property type="entry name" value="Tankyrase-bd_C"/>
</dbReference>
<dbReference type="InterPro" id="IPR040006">
    <property type="entry name" value="TNKS1BP1-like"/>
</dbReference>
<dbReference type="PANTHER" id="PTHR22042:SF2">
    <property type="entry name" value="182 KDA TANKYRASE-1-BINDING PROTEIN"/>
    <property type="match status" value="1"/>
</dbReference>
<dbReference type="PANTHER" id="PTHR22042">
    <property type="entry name" value="TANKYRASE 1 BINDING PROTEIN"/>
    <property type="match status" value="1"/>
</dbReference>
<dbReference type="Pfam" id="PF15327">
    <property type="entry name" value="Tankyrase_bdg_C"/>
    <property type="match status" value="1"/>
</dbReference>
<dbReference type="SMART" id="SM01319">
    <property type="entry name" value="Tankyrase_bdg_C"/>
    <property type="match status" value="1"/>
</dbReference>
<name>TB182_HUMAN</name>
<feature type="chain" id="PRO_0000072437" description="182 kDa tankyrase-1-binding protein">
    <location>
        <begin position="1"/>
        <end position="1729"/>
    </location>
</feature>
<feature type="region of interest" description="Disordered" evidence="3">
    <location>
        <begin position="1"/>
        <end position="151"/>
    </location>
</feature>
<feature type="region of interest" description="Disordered" evidence="3">
    <location>
        <begin position="184"/>
        <end position="450"/>
    </location>
</feature>
<feature type="region of interest" description="Acidic">
    <location>
        <begin position="210"/>
        <end position="1572"/>
    </location>
</feature>
<feature type="region of interest" description="Disordered" evidence="3">
    <location>
        <begin position="484"/>
        <end position="603"/>
    </location>
</feature>
<feature type="region of interest" description="Disordered" evidence="3">
    <location>
        <begin position="657"/>
        <end position="880"/>
    </location>
</feature>
<feature type="region of interest" description="Disordered" evidence="3">
    <location>
        <begin position="897"/>
        <end position="1083"/>
    </location>
</feature>
<feature type="region of interest" description="Disordered" evidence="3">
    <location>
        <begin position="1240"/>
        <end position="1302"/>
    </location>
</feature>
<feature type="region of interest" description="Disordered" evidence="3">
    <location>
        <begin position="1362"/>
        <end position="1561"/>
    </location>
</feature>
<feature type="region of interest" description="Tankyrase-binding">
    <location>
        <begin position="1450"/>
        <end position="1542"/>
    </location>
</feature>
<feature type="region of interest" description="Disordered" evidence="3">
    <location>
        <begin position="1575"/>
        <end position="1729"/>
    </location>
</feature>
<feature type="short sequence motif" description="Nuclear localization signal" evidence="2">
    <location>
        <begin position="1629"/>
        <end position="1635"/>
    </location>
</feature>
<feature type="short sequence motif" description="Nuclear localization signal" evidence="2">
    <location>
        <begin position="1723"/>
        <end position="1729"/>
    </location>
</feature>
<feature type="compositionally biased region" description="Polar residues" evidence="3">
    <location>
        <begin position="1"/>
        <end position="12"/>
    </location>
</feature>
<feature type="compositionally biased region" description="Low complexity" evidence="3">
    <location>
        <begin position="46"/>
        <end position="63"/>
    </location>
</feature>
<feature type="compositionally biased region" description="Basic and acidic residues" evidence="3">
    <location>
        <begin position="117"/>
        <end position="127"/>
    </location>
</feature>
<feature type="compositionally biased region" description="Basic and acidic residues" evidence="3">
    <location>
        <begin position="230"/>
        <end position="245"/>
    </location>
</feature>
<feature type="compositionally biased region" description="Low complexity" evidence="3">
    <location>
        <begin position="352"/>
        <end position="363"/>
    </location>
</feature>
<feature type="compositionally biased region" description="Pro residues" evidence="3">
    <location>
        <begin position="364"/>
        <end position="374"/>
    </location>
</feature>
<feature type="compositionally biased region" description="Low complexity" evidence="3">
    <location>
        <begin position="500"/>
        <end position="512"/>
    </location>
</feature>
<feature type="compositionally biased region" description="Low complexity" evidence="3">
    <location>
        <begin position="524"/>
        <end position="541"/>
    </location>
</feature>
<feature type="compositionally biased region" description="Low complexity" evidence="3">
    <location>
        <begin position="572"/>
        <end position="583"/>
    </location>
</feature>
<feature type="compositionally biased region" description="Polar residues" evidence="3">
    <location>
        <begin position="738"/>
        <end position="753"/>
    </location>
</feature>
<feature type="compositionally biased region" description="Polar residues" evidence="3">
    <location>
        <begin position="803"/>
        <end position="812"/>
    </location>
</feature>
<feature type="compositionally biased region" description="Basic and acidic residues" evidence="3">
    <location>
        <begin position="858"/>
        <end position="872"/>
    </location>
</feature>
<feature type="compositionally biased region" description="Basic and acidic residues" evidence="3">
    <location>
        <begin position="1012"/>
        <end position="1021"/>
    </location>
</feature>
<feature type="compositionally biased region" description="Polar residues" evidence="3">
    <location>
        <begin position="1043"/>
        <end position="1054"/>
    </location>
</feature>
<feature type="compositionally biased region" description="Basic and acidic residues" evidence="3">
    <location>
        <begin position="1389"/>
        <end position="1400"/>
    </location>
</feature>
<feature type="compositionally biased region" description="Polar residues" evidence="3">
    <location>
        <begin position="1406"/>
        <end position="1419"/>
    </location>
</feature>
<feature type="compositionally biased region" description="Basic residues" evidence="3">
    <location>
        <begin position="1577"/>
        <end position="1586"/>
    </location>
</feature>
<feature type="compositionally biased region" description="Basic and acidic residues" evidence="3">
    <location>
        <begin position="1602"/>
        <end position="1615"/>
    </location>
</feature>
<feature type="compositionally biased region" description="Basic and acidic residues" evidence="3">
    <location>
        <begin position="1665"/>
        <end position="1679"/>
    </location>
</feature>
<feature type="modified residue" description="Phosphoserine" evidence="16">
    <location>
        <position position="14"/>
    </location>
</feature>
<feature type="modified residue" description="Phosphothreonine" evidence="18">
    <location>
        <position position="131"/>
    </location>
</feature>
<feature type="modified residue" description="Phosphoserine" evidence="10 14 16">
    <location>
        <position position="178"/>
    </location>
</feature>
<feature type="modified residue" description="Phosphoserine" evidence="14 18">
    <location>
        <position position="221"/>
    </location>
</feature>
<feature type="modified residue" description="Phosphoserine" evidence="16 18">
    <location>
        <position position="228"/>
    </location>
</feature>
<feature type="modified residue" description="Phosphothreonine" evidence="10">
    <location>
        <position position="239"/>
    </location>
</feature>
<feature type="modified residue" description="Phosphoserine" evidence="10">
    <location>
        <position position="287"/>
    </location>
</feature>
<feature type="modified residue" description="Phosphoserine" evidence="18">
    <location>
        <position position="301"/>
    </location>
</feature>
<feature type="modified residue" description="Phosphoserine" evidence="10 13 14 15 16 18">
    <location>
        <position position="429"/>
    </location>
</feature>
<feature type="modified residue" description="Phosphoserine" evidence="10 14 16">
    <location>
        <position position="435"/>
    </location>
</feature>
<feature type="modified residue" description="Phosphoserine" evidence="14 16">
    <location>
        <position position="437"/>
    </location>
</feature>
<feature type="modified residue" description="Phosphoserine" evidence="10 13 16 18">
    <location>
        <position position="494"/>
    </location>
</feature>
<feature type="modified residue" description="Phosphoserine" evidence="10 18">
    <location>
        <position position="498"/>
    </location>
</feature>
<feature type="modified residue" description="Phosphothreonine" evidence="1">
    <location>
        <position position="501"/>
    </location>
</feature>
<feature type="modified residue" description="Phosphoserine" evidence="10 11 14 15 16 18">
    <location>
        <position position="601"/>
    </location>
</feature>
<feature type="modified residue" description="Phosphoserine" evidence="8 10 14 15 16 18">
    <location>
        <position position="672"/>
    </location>
</feature>
<feature type="modified residue" description="Phosphoserine" evidence="7 11 12 13 14 15 16 18">
    <location>
        <position position="691"/>
    </location>
</feature>
<feature type="modified residue" description="Phosphoserine" evidence="7">
    <location>
        <position position="695"/>
    </location>
</feature>
<feature type="modified residue" description="Phosphoserine" evidence="10">
    <location>
        <position position="712"/>
    </location>
</feature>
<feature type="modified residue" description="Phosphoserine" evidence="18">
    <location>
        <position position="724"/>
    </location>
</feature>
<feature type="modified residue" description="Phosphoserine" evidence="10">
    <location>
        <position position="744"/>
    </location>
</feature>
<feature type="modified residue" description="Phosphoserine" evidence="10 14 18">
    <location>
        <position position="762"/>
    </location>
</feature>
<feature type="modified residue" description="Phosphoserine" evidence="18">
    <location>
        <position position="806"/>
    </location>
</feature>
<feature type="modified residue" description="Phosphothreonine" evidence="8">
    <location>
        <position position="833"/>
    </location>
</feature>
<feature type="modified residue" description="Phosphoserine" evidence="7 8 9 11 13 14 15 16 18">
    <location>
        <position position="836"/>
    </location>
</feature>
<feature type="modified residue" description="Phosphoserine" evidence="15">
    <location>
        <position position="851"/>
    </location>
</feature>
<feature type="modified residue" description="Phosphoserine" evidence="10 14 15 16">
    <location>
        <position position="872"/>
    </location>
</feature>
<feature type="modified residue" description="Phosphoserine" evidence="10">
    <location>
        <position position="877"/>
    </location>
</feature>
<feature type="modified residue" description="Phosphoserine" evidence="14 16">
    <location>
        <position position="882"/>
    </location>
</feature>
<feature type="modified residue" description="Phosphoserine" evidence="10 14 15 16 18">
    <location>
        <position position="893"/>
    </location>
</feature>
<feature type="modified residue" description="Phosphotyrosine" evidence="18">
    <location>
        <position position="897"/>
    </location>
</feature>
<feature type="modified residue" description="Phosphoserine" evidence="15 16">
    <location>
        <position position="899"/>
    </location>
</feature>
<feature type="modified residue" description="Phosphoserine" evidence="10 16">
    <location>
        <position position="920"/>
    </location>
</feature>
<feature type="modified residue" description="Phosphoserine" evidence="10 16">
    <location>
        <position position="936"/>
    </location>
</feature>
<feature type="modified residue" description="Phosphoserine" evidence="18">
    <location>
        <position position="976"/>
    </location>
</feature>
<feature type="modified residue" description="Phosphothreonine" evidence="10">
    <location>
        <position position="979"/>
    </location>
</feature>
<feature type="modified residue" description="Phosphoserine" evidence="10">
    <location>
        <position position="983"/>
    </location>
</feature>
<feature type="modified residue" description="Phosphoserine" evidence="10 14 16">
    <location>
        <position position="987"/>
    </location>
</feature>
<feature type="modified residue" description="Phosphoserine" evidence="18">
    <location>
        <position position="1004"/>
    </location>
</feature>
<feature type="modified residue" description="Phosphoserine" evidence="10 14 18">
    <location>
        <position position="1008"/>
    </location>
</feature>
<feature type="modified residue" description="Phosphoserine" evidence="16">
    <location>
        <position position="1013"/>
    </location>
</feature>
<feature type="modified residue" description="Phosphoserine" evidence="14 16 18">
    <location>
        <position position="1024"/>
    </location>
</feature>
<feature type="modified residue" description="Phosphoserine" evidence="10 16">
    <location>
        <position position="1029"/>
    </location>
</feature>
<feature type="modified residue" description="Phosphoserine" evidence="15 16">
    <location>
        <position position="1054"/>
    </location>
</feature>
<feature type="modified residue" description="Phosphoserine" evidence="16 18">
    <location>
        <position position="1073"/>
    </location>
</feature>
<feature type="modified residue" description="Phosphoserine" evidence="18">
    <location>
        <position position="1091"/>
    </location>
</feature>
<feature type="modified residue" description="Phosphoserine" evidence="7 10 11 14 16 18">
    <location>
        <position position="1103"/>
    </location>
</feature>
<feature type="modified residue" description="Phosphoserine" evidence="10 14">
    <location>
        <position position="1133"/>
    </location>
</feature>
<feature type="modified residue" description="Phosphoserine" evidence="7 10 14 15 16 18">
    <location>
        <position position="1138"/>
    </location>
</feature>
<feature type="modified residue" description="Phosphoserine" evidence="16 18">
    <location>
        <position position="1158"/>
    </location>
</feature>
<feature type="modified residue" description="Phosphoserine" evidence="10">
    <location>
        <position position="1178"/>
    </location>
</feature>
<feature type="modified residue" description="Phosphoserine" evidence="9 14">
    <location>
        <position position="1248"/>
    </location>
</feature>
<feature type="modified residue" description="Phosphoserine" evidence="14">
    <location>
        <position position="1253"/>
    </location>
</feature>
<feature type="modified residue" description="Phosphothreonine" evidence="14 16 18">
    <location>
        <position position="1282"/>
    </location>
</feature>
<feature type="modified residue" description="Phosphoserine" evidence="10 14 16 18">
    <location>
        <position position="1297"/>
    </location>
</feature>
<feature type="modified residue" description="Phosphoserine" evidence="10">
    <location>
        <position position="1328"/>
    </location>
</feature>
<feature type="modified residue" description="Phosphoserine" evidence="9 10">
    <location>
        <position position="1331"/>
    </location>
</feature>
<feature type="modified residue" description="Phosphoserine" evidence="8 14 16">
    <location>
        <position position="1383"/>
    </location>
</feature>
<feature type="modified residue" description="Phosphoserine" evidence="8 14 15 16">
    <location>
        <position position="1385"/>
    </location>
</feature>
<feature type="modified residue" description="Phosphoserine" evidence="18">
    <location>
        <position position="1435"/>
    </location>
</feature>
<feature type="modified residue" description="Phosphoserine" evidence="10 18">
    <location>
        <position position="1439"/>
    </location>
</feature>
<feature type="modified residue" description="Phosphoserine" evidence="18">
    <location>
        <position position="1450"/>
    </location>
</feature>
<feature type="modified residue" description="Phosphoserine" evidence="18">
    <location>
        <position position="1452"/>
    </location>
</feature>
<feature type="modified residue" description="Phosphoserine" evidence="18">
    <location>
        <position position="1473"/>
    </location>
</feature>
<feature type="modified residue" description="Phosphoserine" evidence="18">
    <location>
        <position position="1476"/>
    </location>
</feature>
<feature type="modified residue" description="Phosphoserine" evidence="18">
    <location>
        <position position="1503"/>
    </location>
</feature>
<feature type="modified residue" description="Phosphoserine" evidence="18">
    <location>
        <position position="1506"/>
    </location>
</feature>
<feature type="modified residue" description="Phosphothreonine" evidence="18">
    <location>
        <position position="1518"/>
    </location>
</feature>
<feature type="modified residue" description="Phosphoserine" evidence="10 14 15 16 18">
    <location>
        <position position="1533"/>
    </location>
</feature>
<feature type="modified residue" description="Phosphoserine" evidence="10 15 18">
    <location>
        <position position="1545"/>
    </location>
</feature>
<feature type="modified residue" description="Phosphoserine" evidence="10">
    <location>
        <position position="1558"/>
    </location>
</feature>
<feature type="modified residue" description="Phosphothreonine" evidence="10">
    <location>
        <position position="1563"/>
    </location>
</feature>
<feature type="modified residue" description="Phosphoserine" evidence="7 10 13 14 15 16 18">
    <location>
        <position position="1620"/>
    </location>
</feature>
<feature type="modified residue" description="Phosphoserine" evidence="7 10 13 14 15 16 18">
    <location>
        <position position="1621"/>
    </location>
</feature>
<feature type="modified residue" description="Phosphoserine" evidence="15">
    <location>
        <position position="1631"/>
    </location>
</feature>
<feature type="modified residue" description="N6-methyllysine" evidence="17">
    <location>
        <position position="1644"/>
    </location>
</feature>
<feature type="modified residue" description="Phosphoserine" evidence="10 14 16">
    <location>
        <position position="1652"/>
    </location>
</feature>
<feature type="modified residue" description="Phosphoserine" evidence="7 8 10 13 14 15 16">
    <location>
        <position position="1666"/>
    </location>
</feature>
<feature type="modified residue" description="Phosphoserine" evidence="14 16">
    <location>
        <position position="1715"/>
    </location>
</feature>
<feature type="splice variant" id="VSP_026000" description="In isoform 2." evidence="5">
    <location>
        <begin position="1"/>
        <end position="549"/>
    </location>
</feature>
<feature type="splice variant" id="VSP_026001" description="In isoform 2." evidence="5">
    <original>GVGQADWTPDLGLRNMAPGAVCSPGESKELGVGQMDWGNNLGLRDLEVTCDPD</original>
    <variation>LGRHIYALCITLRTPPTPSLPWISSLVVEGFVPSSPPSLSLSASSSSLPWVFF</variation>
    <location>
        <begin position="1275"/>
        <end position="1327"/>
    </location>
</feature>
<feature type="splice variant" id="VSP_026002" description="In isoform 2." evidence="5">
    <location>
        <begin position="1328"/>
        <end position="1729"/>
    </location>
</feature>
<feature type="sequence variant" id="VAR_028141" description="In dbSNP:rs4939134." evidence="4">
    <original>T</original>
    <variation>S</variation>
    <location>
        <position position="322"/>
    </location>
</feature>
<feature type="sequence variant" id="VAR_032615" description="In dbSNP:rs34203865.">
    <original>S</original>
    <variation>N</variation>
    <location>
        <position position="714"/>
    </location>
</feature>
<feature type="sequence conflict" description="In Ref. 1; AAM15531." evidence="6" ref="1">
    <original>L</original>
    <variation>P</variation>
    <location>
        <position position="84"/>
    </location>
</feature>
<feature type="sequence conflict" description="In Ref. 1; AAM15531." evidence="6" ref="1">
    <original>P</original>
    <variation>S</variation>
    <location>
        <position position="388"/>
    </location>
</feature>
<feature type="sequence conflict" description="In Ref. 7; BAB84939." evidence="6" ref="7">
    <original>Q</original>
    <variation>H</variation>
    <location>
        <position position="554"/>
    </location>
</feature>
<feature type="sequence conflict" description="In Ref. 1; AAM15531." evidence="6" ref="1">
    <original>P</original>
    <variation>S</variation>
    <location>
        <position position="604"/>
    </location>
</feature>
<feature type="sequence conflict" description="In Ref. 1; AAM15531." evidence="6" ref="1">
    <original>S</original>
    <variation>F</variation>
    <location>
        <position position="1450"/>
    </location>
</feature>